<name>TACD2_MOUSE</name>
<comment type="function">
    <text evidence="1">May function as a growth factor receptor.</text>
</comment>
<comment type="subcellular location">
    <subcellularLocation>
        <location evidence="1">Membrane</location>
        <topology evidence="1">Single-pass type I membrane protein</topology>
    </subcellularLocation>
</comment>
<comment type="tissue specificity">
    <text evidence="4">Expressed in kidney, lung, ovary and testis. High levels of expression in immortalized keratinocytes.</text>
</comment>
<comment type="similarity">
    <text evidence="5">Belongs to the EPCAM family.</text>
</comment>
<accession>Q8BGV3</accession>
<accession>O55130</accession>
<feature type="signal peptide" evidence="2">
    <location>
        <begin position="1"/>
        <end position="24"/>
    </location>
</feature>
<feature type="chain" id="PRO_0000380187" description="Tumor-associated calcium signal transducer 2">
    <location>
        <begin position="25"/>
        <end position="317"/>
    </location>
</feature>
<feature type="topological domain" description="Extracellular" evidence="2">
    <location>
        <begin position="25"/>
        <end position="270"/>
    </location>
</feature>
<feature type="transmembrane region" description="Helical" evidence="2">
    <location>
        <begin position="271"/>
        <end position="291"/>
    </location>
</feature>
<feature type="topological domain" description="Cytoplasmic" evidence="2">
    <location>
        <begin position="292"/>
        <end position="317"/>
    </location>
</feature>
<feature type="domain" description="Thyroglobulin type-1" evidence="3">
    <location>
        <begin position="64"/>
        <end position="139"/>
    </location>
</feature>
<feature type="glycosylation site" description="N-linked (GlcNAc...) asparagine" evidence="2">
    <location>
        <position position="27"/>
    </location>
</feature>
<feature type="glycosylation site" description="N-linked (GlcNAc...) asparagine" evidence="2">
    <location>
        <position position="114"/>
    </location>
</feature>
<feature type="glycosylation site" description="N-linked (GlcNAc...) asparagine" evidence="2">
    <location>
        <position position="162"/>
    </location>
</feature>
<feature type="glycosylation site" description="N-linked (GlcNAc...) asparagine" evidence="2">
    <location>
        <position position="202"/>
    </location>
</feature>
<feature type="disulfide bond" evidence="3">
    <location>
        <begin position="67"/>
        <end position="102"/>
    </location>
</feature>
<feature type="disulfide bond" evidence="3">
    <location>
        <begin position="113"/>
        <end position="119"/>
    </location>
</feature>
<feature type="disulfide bond" evidence="3">
    <location>
        <begin position="121"/>
        <end position="139"/>
    </location>
</feature>
<feature type="sequence conflict" description="In Ref. 1; CAA70063." evidence="5" ref="1">
    <original>A</original>
    <variation>V</variation>
    <location>
        <position position="187"/>
    </location>
</feature>
<feature type="sequence conflict" description="In Ref. 1; CAA70063." evidence="5" ref="1">
    <original>A</original>
    <variation>V</variation>
    <location>
        <position position="203"/>
    </location>
</feature>
<feature type="sequence conflict" description="In Ref. 1; CAA70063." evidence="5" ref="1">
    <original>L</original>
    <variation>V</variation>
    <location>
        <position position="251"/>
    </location>
</feature>
<evidence type="ECO:0000250" key="1"/>
<evidence type="ECO:0000255" key="2"/>
<evidence type="ECO:0000255" key="3">
    <source>
        <dbReference type="PROSITE-ProRule" id="PRU00500"/>
    </source>
</evidence>
<evidence type="ECO:0000269" key="4">
    <source>
    </source>
</evidence>
<evidence type="ECO:0000305" key="5"/>
<organism>
    <name type="scientific">Mus musculus</name>
    <name type="common">Mouse</name>
    <dbReference type="NCBI Taxonomy" id="10090"/>
    <lineage>
        <taxon>Eukaryota</taxon>
        <taxon>Metazoa</taxon>
        <taxon>Chordata</taxon>
        <taxon>Craniata</taxon>
        <taxon>Vertebrata</taxon>
        <taxon>Euteleostomi</taxon>
        <taxon>Mammalia</taxon>
        <taxon>Eutheria</taxon>
        <taxon>Euarchontoglires</taxon>
        <taxon>Glires</taxon>
        <taxon>Rodentia</taxon>
        <taxon>Myomorpha</taxon>
        <taxon>Muroidea</taxon>
        <taxon>Muridae</taxon>
        <taxon>Murinae</taxon>
        <taxon>Mus</taxon>
        <taxon>Mus</taxon>
    </lineage>
</organism>
<protein>
    <recommendedName>
        <fullName>Tumor-associated calcium signal transducer 2</fullName>
    </recommendedName>
    <alternativeName>
        <fullName>Cell surface glycoprotein Trop-2</fullName>
    </alternativeName>
</protein>
<gene>
    <name type="primary">Tacstd2</name>
    <name type="synonym">Trop2</name>
</gene>
<dbReference type="EMBL" id="Y08830">
    <property type="protein sequence ID" value="CAA70063.1"/>
    <property type="molecule type" value="Genomic_DNA"/>
</dbReference>
<dbReference type="EMBL" id="AK076410">
    <property type="protein sequence ID" value="BAC36328.1"/>
    <property type="molecule type" value="mRNA"/>
</dbReference>
<dbReference type="EMBL" id="AK077370">
    <property type="protein sequence ID" value="BAC36773.1"/>
    <property type="molecule type" value="mRNA"/>
</dbReference>
<dbReference type="EMBL" id="AK085753">
    <property type="protein sequence ID" value="BAC39531.1"/>
    <property type="molecule type" value="mRNA"/>
</dbReference>
<dbReference type="EMBL" id="CH466523">
    <property type="protein sequence ID" value="EDK98807.1"/>
    <property type="molecule type" value="Genomic_DNA"/>
</dbReference>
<dbReference type="EMBL" id="BC117719">
    <property type="protein sequence ID" value="AAI17720.1"/>
    <property type="molecule type" value="mRNA"/>
</dbReference>
<dbReference type="EMBL" id="BC117720">
    <property type="protein sequence ID" value="AAI17721.1"/>
    <property type="molecule type" value="mRNA"/>
</dbReference>
<dbReference type="CCDS" id="CCDS20221.1"/>
<dbReference type="RefSeq" id="NP_064431.2">
    <property type="nucleotide sequence ID" value="NM_020047.3"/>
</dbReference>
<dbReference type="SMR" id="Q8BGV3"/>
<dbReference type="FunCoup" id="Q8BGV3">
    <property type="interactions" value="226"/>
</dbReference>
<dbReference type="STRING" id="10090.ENSMUSP00000060099"/>
<dbReference type="GlyCosmos" id="Q8BGV3">
    <property type="glycosylation" value="4 sites, No reported glycans"/>
</dbReference>
<dbReference type="GlyGen" id="Q8BGV3">
    <property type="glycosylation" value="4 sites"/>
</dbReference>
<dbReference type="iPTMnet" id="Q8BGV3"/>
<dbReference type="PhosphoSitePlus" id="Q8BGV3"/>
<dbReference type="PaxDb" id="10090-ENSMUSP00000060099"/>
<dbReference type="PeptideAtlas" id="Q8BGV3"/>
<dbReference type="ProteomicsDB" id="259340"/>
<dbReference type="Antibodypedia" id="33262">
    <property type="antibodies" value="838 antibodies from 48 providers"/>
</dbReference>
<dbReference type="DNASU" id="56753"/>
<dbReference type="Ensembl" id="ENSMUST00000058178.6">
    <property type="protein sequence ID" value="ENSMUSP00000060099.5"/>
    <property type="gene ID" value="ENSMUSG00000051397.6"/>
</dbReference>
<dbReference type="GeneID" id="56753"/>
<dbReference type="KEGG" id="mmu:56753"/>
<dbReference type="UCSC" id="uc009cfq.1">
    <property type="organism name" value="mouse"/>
</dbReference>
<dbReference type="AGR" id="MGI:1861606"/>
<dbReference type="CTD" id="4070"/>
<dbReference type="MGI" id="MGI:1861606">
    <property type="gene designation" value="Tacstd2"/>
</dbReference>
<dbReference type="VEuPathDB" id="HostDB:ENSMUSG00000051397"/>
<dbReference type="eggNOG" id="ENOG502QVSU">
    <property type="taxonomic scope" value="Eukaryota"/>
</dbReference>
<dbReference type="GeneTree" id="ENSGT00390000018245"/>
<dbReference type="HOGENOM" id="CLU_075326_0_0_1"/>
<dbReference type="InParanoid" id="Q8BGV3"/>
<dbReference type="OMA" id="YDPDCDH"/>
<dbReference type="OrthoDB" id="8953056at2759"/>
<dbReference type="PhylomeDB" id="Q8BGV3"/>
<dbReference type="TreeFam" id="TF332767"/>
<dbReference type="BioGRID-ORCS" id="56753">
    <property type="hits" value="2 hits in 78 CRISPR screens"/>
</dbReference>
<dbReference type="PRO" id="PR:Q8BGV3"/>
<dbReference type="Proteomes" id="UP000000589">
    <property type="component" value="Chromosome 6"/>
</dbReference>
<dbReference type="RNAct" id="Q8BGV3">
    <property type="molecule type" value="protein"/>
</dbReference>
<dbReference type="Bgee" id="ENSMUSG00000051397">
    <property type="expression patterns" value="Expressed in substantia propria of cornea and 107 other cell types or tissues"/>
</dbReference>
<dbReference type="GO" id="GO:0009925">
    <property type="term" value="C:basal plasma membrane"/>
    <property type="evidence" value="ECO:0000314"/>
    <property type="project" value="UniProtKB"/>
</dbReference>
<dbReference type="GO" id="GO:0005615">
    <property type="term" value="C:extracellular space"/>
    <property type="evidence" value="ECO:0000314"/>
    <property type="project" value="MGI"/>
</dbReference>
<dbReference type="GO" id="GO:0016328">
    <property type="term" value="C:lateral plasma membrane"/>
    <property type="evidence" value="ECO:0000314"/>
    <property type="project" value="UniProtKB"/>
</dbReference>
<dbReference type="GO" id="GO:0016020">
    <property type="term" value="C:membrane"/>
    <property type="evidence" value="ECO:0000314"/>
    <property type="project" value="MGI"/>
</dbReference>
<dbReference type="GO" id="GO:0005634">
    <property type="term" value="C:nucleus"/>
    <property type="evidence" value="ECO:0000314"/>
    <property type="project" value="MGI"/>
</dbReference>
<dbReference type="GO" id="GO:0005886">
    <property type="term" value="C:plasma membrane"/>
    <property type="evidence" value="ECO:0000314"/>
    <property type="project" value="MGI"/>
</dbReference>
<dbReference type="GO" id="GO:0090191">
    <property type="term" value="P:negative regulation of branching involved in ureteric bud morphogenesis"/>
    <property type="evidence" value="ECO:0000314"/>
    <property type="project" value="UniProtKB"/>
</dbReference>
<dbReference type="GO" id="GO:2000146">
    <property type="term" value="P:negative regulation of cell motility"/>
    <property type="evidence" value="ECO:0000314"/>
    <property type="project" value="UniProtKB"/>
</dbReference>
<dbReference type="GO" id="GO:0010633">
    <property type="term" value="P:negative regulation of epithelial cell migration"/>
    <property type="evidence" value="ECO:0000314"/>
    <property type="project" value="UniProtKB"/>
</dbReference>
<dbReference type="GO" id="GO:1900028">
    <property type="term" value="P:negative regulation of ruffle assembly"/>
    <property type="evidence" value="ECO:0000314"/>
    <property type="project" value="UniProtKB"/>
</dbReference>
<dbReference type="GO" id="GO:0051497">
    <property type="term" value="P:negative regulation of stress fiber assembly"/>
    <property type="evidence" value="ECO:0000314"/>
    <property type="project" value="UniProtKB"/>
</dbReference>
<dbReference type="GO" id="GO:1900025">
    <property type="term" value="P:negative regulation of substrate adhesion-dependent cell spreading"/>
    <property type="evidence" value="ECO:0000314"/>
    <property type="project" value="UniProtKB"/>
</dbReference>
<dbReference type="GO" id="GO:2000738">
    <property type="term" value="P:positive regulation of stem cell differentiation"/>
    <property type="evidence" value="ECO:0000314"/>
    <property type="project" value="MGI"/>
</dbReference>
<dbReference type="GO" id="GO:0050678">
    <property type="term" value="P:regulation of epithelial cell proliferation"/>
    <property type="evidence" value="ECO:0000270"/>
    <property type="project" value="UniProtKB"/>
</dbReference>
<dbReference type="GO" id="GO:0060675">
    <property type="term" value="P:ureteric bud morphogenesis"/>
    <property type="evidence" value="ECO:0000270"/>
    <property type="project" value="UniProtKB"/>
</dbReference>
<dbReference type="CDD" id="cd00191">
    <property type="entry name" value="TY"/>
    <property type="match status" value="1"/>
</dbReference>
<dbReference type="FunFam" id="4.10.800.10:FF:000008">
    <property type="entry name" value="tumor-associated calcium signal transducer 2"/>
    <property type="match status" value="1"/>
</dbReference>
<dbReference type="Gene3D" id="4.10.800.10">
    <property type="entry name" value="Thyroglobulin type-1"/>
    <property type="match status" value="1"/>
</dbReference>
<dbReference type="InterPro" id="IPR049420">
    <property type="entry name" value="EPCAM-Trop-2_C"/>
</dbReference>
<dbReference type="InterPro" id="IPR043406">
    <property type="entry name" value="EPCAM/Trop-2"/>
</dbReference>
<dbReference type="InterPro" id="IPR041630">
    <property type="entry name" value="EpCAM_N"/>
</dbReference>
<dbReference type="InterPro" id="IPR000716">
    <property type="entry name" value="Thyroglobulin_1"/>
</dbReference>
<dbReference type="InterPro" id="IPR036857">
    <property type="entry name" value="Thyroglobulin_1_sf"/>
</dbReference>
<dbReference type="PANTHER" id="PTHR14168">
    <property type="entry name" value="TUMOR-ASSOCIATED CALCIUM SIGNAL TRANSDUCER"/>
    <property type="match status" value="1"/>
</dbReference>
<dbReference type="PANTHER" id="PTHR14168:SF5">
    <property type="entry name" value="TUMOR-ASSOCIATED CALCIUM SIGNAL TRANSDUCER 2"/>
    <property type="match status" value="1"/>
</dbReference>
<dbReference type="Pfam" id="PF21283">
    <property type="entry name" value="EPCAM-Trop-2_C"/>
    <property type="match status" value="1"/>
</dbReference>
<dbReference type="Pfam" id="PF18635">
    <property type="entry name" value="EpCAM_N"/>
    <property type="match status" value="1"/>
</dbReference>
<dbReference type="Pfam" id="PF00086">
    <property type="entry name" value="Thyroglobulin_1"/>
    <property type="match status" value="1"/>
</dbReference>
<dbReference type="SMART" id="SM00211">
    <property type="entry name" value="TY"/>
    <property type="match status" value="1"/>
</dbReference>
<dbReference type="SUPFAM" id="SSF57610">
    <property type="entry name" value="Thyroglobulin type-1 domain"/>
    <property type="match status" value="1"/>
</dbReference>
<dbReference type="PROSITE" id="PS00484">
    <property type="entry name" value="THYROGLOBULIN_1_1"/>
    <property type="match status" value="1"/>
</dbReference>
<dbReference type="PROSITE" id="PS51162">
    <property type="entry name" value="THYROGLOBULIN_1_2"/>
    <property type="match status" value="1"/>
</dbReference>
<proteinExistence type="evidence at protein level"/>
<sequence length="317" mass="35574">MARGLDLAPLLLLLLAMATRFCTAQSNCTCPTNKMTVCDTNGPGGVCQCRAMGSQVLVDCSTLTSKCLLLKARMSARKSGRSLVMPSEHAILDNDGLYDPECDDKGRFKARQCNQTSVCWCVNSVGVRRTDKGDQSLRCDEVVRTHHILIELRHRPTDRAFNHSDLDSELRRLFQERYKLHPSFLSAVHYEEPTIQIELRQNASQKGLRDVDIADAAYYFERDIKGESLFMGRRGLDVQVRGEPLHVERTLIYYLDEKPPQFSMKRLTAGVIAVIAVVSVAVVAGVVVLVVTKRRKSGKYKKVELKELGEMRSEPSL</sequence>
<reference key="1">
    <citation type="journal article" date="1998" name="Int. J. Cancer">
        <title>Cloning of the murine TROP2 gene: conservation of a PIP2-binding sequence in the cytoplasmic domain of TROP-2.</title>
        <authorList>
            <person name="El Sewedy T."/>
            <person name="Fornaro M."/>
            <person name="Alberti S."/>
        </authorList>
    </citation>
    <scope>NUCLEOTIDE SEQUENCE [GENOMIC DNA]</scope>
    <scope>TISSUE SPECIFICITY</scope>
    <source>
        <strain>129/Sv</strain>
    </source>
</reference>
<reference key="2">
    <citation type="journal article" date="2005" name="Science">
        <title>The transcriptional landscape of the mammalian genome.</title>
        <authorList>
            <person name="Carninci P."/>
            <person name="Kasukawa T."/>
            <person name="Katayama S."/>
            <person name="Gough J."/>
            <person name="Frith M.C."/>
            <person name="Maeda N."/>
            <person name="Oyama R."/>
            <person name="Ravasi T."/>
            <person name="Lenhard B."/>
            <person name="Wells C."/>
            <person name="Kodzius R."/>
            <person name="Shimokawa K."/>
            <person name="Bajic V.B."/>
            <person name="Brenner S.E."/>
            <person name="Batalov S."/>
            <person name="Forrest A.R."/>
            <person name="Zavolan M."/>
            <person name="Davis M.J."/>
            <person name="Wilming L.G."/>
            <person name="Aidinis V."/>
            <person name="Allen J.E."/>
            <person name="Ambesi-Impiombato A."/>
            <person name="Apweiler R."/>
            <person name="Aturaliya R.N."/>
            <person name="Bailey T.L."/>
            <person name="Bansal M."/>
            <person name="Baxter L."/>
            <person name="Beisel K.W."/>
            <person name="Bersano T."/>
            <person name="Bono H."/>
            <person name="Chalk A.M."/>
            <person name="Chiu K.P."/>
            <person name="Choudhary V."/>
            <person name="Christoffels A."/>
            <person name="Clutterbuck D.R."/>
            <person name="Crowe M.L."/>
            <person name="Dalla E."/>
            <person name="Dalrymple B.P."/>
            <person name="de Bono B."/>
            <person name="Della Gatta G."/>
            <person name="di Bernardo D."/>
            <person name="Down T."/>
            <person name="Engstrom P."/>
            <person name="Fagiolini M."/>
            <person name="Faulkner G."/>
            <person name="Fletcher C.F."/>
            <person name="Fukushima T."/>
            <person name="Furuno M."/>
            <person name="Futaki S."/>
            <person name="Gariboldi M."/>
            <person name="Georgii-Hemming P."/>
            <person name="Gingeras T.R."/>
            <person name="Gojobori T."/>
            <person name="Green R.E."/>
            <person name="Gustincich S."/>
            <person name="Harbers M."/>
            <person name="Hayashi Y."/>
            <person name="Hensch T.K."/>
            <person name="Hirokawa N."/>
            <person name="Hill D."/>
            <person name="Huminiecki L."/>
            <person name="Iacono M."/>
            <person name="Ikeo K."/>
            <person name="Iwama A."/>
            <person name="Ishikawa T."/>
            <person name="Jakt M."/>
            <person name="Kanapin A."/>
            <person name="Katoh M."/>
            <person name="Kawasawa Y."/>
            <person name="Kelso J."/>
            <person name="Kitamura H."/>
            <person name="Kitano H."/>
            <person name="Kollias G."/>
            <person name="Krishnan S.P."/>
            <person name="Kruger A."/>
            <person name="Kummerfeld S.K."/>
            <person name="Kurochkin I.V."/>
            <person name="Lareau L.F."/>
            <person name="Lazarevic D."/>
            <person name="Lipovich L."/>
            <person name="Liu J."/>
            <person name="Liuni S."/>
            <person name="McWilliam S."/>
            <person name="Madan Babu M."/>
            <person name="Madera M."/>
            <person name="Marchionni L."/>
            <person name="Matsuda H."/>
            <person name="Matsuzawa S."/>
            <person name="Miki H."/>
            <person name="Mignone F."/>
            <person name="Miyake S."/>
            <person name="Morris K."/>
            <person name="Mottagui-Tabar S."/>
            <person name="Mulder N."/>
            <person name="Nakano N."/>
            <person name="Nakauchi H."/>
            <person name="Ng P."/>
            <person name="Nilsson R."/>
            <person name="Nishiguchi S."/>
            <person name="Nishikawa S."/>
            <person name="Nori F."/>
            <person name="Ohara O."/>
            <person name="Okazaki Y."/>
            <person name="Orlando V."/>
            <person name="Pang K.C."/>
            <person name="Pavan W.J."/>
            <person name="Pavesi G."/>
            <person name="Pesole G."/>
            <person name="Petrovsky N."/>
            <person name="Piazza S."/>
            <person name="Reed J."/>
            <person name="Reid J.F."/>
            <person name="Ring B.Z."/>
            <person name="Ringwald M."/>
            <person name="Rost B."/>
            <person name="Ruan Y."/>
            <person name="Salzberg S.L."/>
            <person name="Sandelin A."/>
            <person name="Schneider C."/>
            <person name="Schoenbach C."/>
            <person name="Sekiguchi K."/>
            <person name="Semple C.A."/>
            <person name="Seno S."/>
            <person name="Sessa L."/>
            <person name="Sheng Y."/>
            <person name="Shibata Y."/>
            <person name="Shimada H."/>
            <person name="Shimada K."/>
            <person name="Silva D."/>
            <person name="Sinclair B."/>
            <person name="Sperling S."/>
            <person name="Stupka E."/>
            <person name="Sugiura K."/>
            <person name="Sultana R."/>
            <person name="Takenaka Y."/>
            <person name="Taki K."/>
            <person name="Tammoja K."/>
            <person name="Tan S.L."/>
            <person name="Tang S."/>
            <person name="Taylor M.S."/>
            <person name="Tegner J."/>
            <person name="Teichmann S.A."/>
            <person name="Ueda H.R."/>
            <person name="van Nimwegen E."/>
            <person name="Verardo R."/>
            <person name="Wei C.L."/>
            <person name="Yagi K."/>
            <person name="Yamanishi H."/>
            <person name="Zabarovsky E."/>
            <person name="Zhu S."/>
            <person name="Zimmer A."/>
            <person name="Hide W."/>
            <person name="Bult C."/>
            <person name="Grimmond S.M."/>
            <person name="Teasdale R.D."/>
            <person name="Liu E.T."/>
            <person name="Brusic V."/>
            <person name="Quackenbush J."/>
            <person name="Wahlestedt C."/>
            <person name="Mattick J.S."/>
            <person name="Hume D.A."/>
            <person name="Kai C."/>
            <person name="Sasaki D."/>
            <person name="Tomaru Y."/>
            <person name="Fukuda S."/>
            <person name="Kanamori-Katayama M."/>
            <person name="Suzuki M."/>
            <person name="Aoki J."/>
            <person name="Arakawa T."/>
            <person name="Iida J."/>
            <person name="Imamura K."/>
            <person name="Itoh M."/>
            <person name="Kato T."/>
            <person name="Kawaji H."/>
            <person name="Kawagashira N."/>
            <person name="Kawashima T."/>
            <person name="Kojima M."/>
            <person name="Kondo S."/>
            <person name="Konno H."/>
            <person name="Nakano K."/>
            <person name="Ninomiya N."/>
            <person name="Nishio T."/>
            <person name="Okada M."/>
            <person name="Plessy C."/>
            <person name="Shibata K."/>
            <person name="Shiraki T."/>
            <person name="Suzuki S."/>
            <person name="Tagami M."/>
            <person name="Waki K."/>
            <person name="Watahiki A."/>
            <person name="Okamura-Oho Y."/>
            <person name="Suzuki H."/>
            <person name="Kawai J."/>
            <person name="Hayashizaki Y."/>
        </authorList>
    </citation>
    <scope>NUCLEOTIDE SEQUENCE [LARGE SCALE MRNA]</scope>
    <source>
        <strain>C57BL/6J</strain>
        <tissue>Head</tissue>
        <tissue>Mammary gland</tissue>
        <tissue>Skin</tissue>
    </source>
</reference>
<reference key="3">
    <citation type="submission" date="2005-07" db="EMBL/GenBank/DDBJ databases">
        <authorList>
            <person name="Mural R.J."/>
            <person name="Adams M.D."/>
            <person name="Myers E.W."/>
            <person name="Smith H.O."/>
            <person name="Venter J.C."/>
        </authorList>
    </citation>
    <scope>NUCLEOTIDE SEQUENCE [LARGE SCALE GENOMIC DNA]</scope>
</reference>
<reference key="4">
    <citation type="journal article" date="2004" name="Genome Res.">
        <title>The status, quality, and expansion of the NIH full-length cDNA project: the Mammalian Gene Collection (MGC).</title>
        <authorList>
            <consortium name="The MGC Project Team"/>
        </authorList>
    </citation>
    <scope>NUCLEOTIDE SEQUENCE [LARGE SCALE MRNA]</scope>
</reference>
<reference key="5">
    <citation type="journal article" date="2010" name="Cell">
        <title>A tissue-specific atlas of mouse protein phosphorylation and expression.</title>
        <authorList>
            <person name="Huttlin E.L."/>
            <person name="Jedrychowski M.P."/>
            <person name="Elias J.E."/>
            <person name="Goswami T."/>
            <person name="Rad R."/>
            <person name="Beausoleil S.A."/>
            <person name="Villen J."/>
            <person name="Haas W."/>
            <person name="Sowa M.E."/>
            <person name="Gygi S.P."/>
        </authorList>
    </citation>
    <scope>IDENTIFICATION BY MASS SPECTROMETRY [LARGE SCALE ANALYSIS]</scope>
    <source>
        <tissue>Kidney</tissue>
    </source>
</reference>
<keyword id="KW-1015">Disulfide bond</keyword>
<keyword id="KW-0325">Glycoprotein</keyword>
<keyword id="KW-0472">Membrane</keyword>
<keyword id="KW-1185">Reference proteome</keyword>
<keyword id="KW-0732">Signal</keyword>
<keyword id="KW-0812">Transmembrane</keyword>
<keyword id="KW-1133">Transmembrane helix</keyword>